<protein>
    <recommendedName>
        <fullName evidence="6">FAD:protein FMN transferase</fullName>
        <ecNumber evidence="5">2.7.1.180</ecNumber>
    </recommendedName>
    <alternativeName>
        <fullName evidence="6">Flavin transferase</fullName>
    </alternativeName>
</protein>
<proteinExistence type="evidence at protein level"/>
<comment type="function">
    <text evidence="5">Flavin transferase that catalyzes the transfer of the FMN moiety of FAD and its covalent binding to the hydroxyl group of a threonine residue in a target flavoprotein such as NqrB and NqrC, two subunits of the NQR complex. Cannot use directly FMN instead of FAD as substrate.</text>
</comment>
<comment type="catalytic activity">
    <reaction evidence="5">
        <text>L-threonyl-[protein] + FAD = FMN-L-threonyl-[protein] + AMP + H(+)</text>
        <dbReference type="Rhea" id="RHEA:36847"/>
        <dbReference type="Rhea" id="RHEA-COMP:11060"/>
        <dbReference type="Rhea" id="RHEA-COMP:11061"/>
        <dbReference type="ChEBI" id="CHEBI:15378"/>
        <dbReference type="ChEBI" id="CHEBI:30013"/>
        <dbReference type="ChEBI" id="CHEBI:57692"/>
        <dbReference type="ChEBI" id="CHEBI:74257"/>
        <dbReference type="ChEBI" id="CHEBI:456215"/>
        <dbReference type="EC" id="2.7.1.180"/>
    </reaction>
</comment>
<comment type="cofactor">
    <cofactor evidence="5">
        <name>Mg(2+)</name>
        <dbReference type="ChEBI" id="CHEBI:18420"/>
    </cofactor>
</comment>
<comment type="subcellular location">
    <subcellularLocation>
        <location evidence="3 4">Cell inner membrane</location>
        <topology evidence="3 4">Lipid-anchor</topology>
        <orientation evidence="3">Periplasmic side</orientation>
    </subcellularLocation>
</comment>
<comment type="similarity">
    <text evidence="7">Belongs to the ApbE family.</text>
</comment>
<comment type="sequence caution" evidence="7">
    <conflict type="erroneous initiation">
        <sequence resource="EMBL-CDS" id="ABQ20132"/>
    </conflict>
    <text>Extended N-terminus.</text>
</comment>
<comment type="sequence caution" evidence="7">
    <conflict type="erroneous initiation">
        <sequence resource="EMBL-CDS" id="ACP10395"/>
    </conflict>
    <text>Extended N-terminus.</text>
</comment>
<organism>
    <name type="scientific">Vibrio cholerae serotype O1 (strain ATCC 39541 / Classical Ogawa 395 / O395)</name>
    <dbReference type="NCBI Taxonomy" id="345073"/>
    <lineage>
        <taxon>Bacteria</taxon>
        <taxon>Pseudomonadati</taxon>
        <taxon>Pseudomonadota</taxon>
        <taxon>Gammaproteobacteria</taxon>
        <taxon>Vibrionales</taxon>
        <taxon>Vibrionaceae</taxon>
        <taxon>Vibrio</taxon>
    </lineage>
</organism>
<sequence length="334" mass="36784">MRNWLVALASLLLLAGCEKPAEQVHLSGPTMGTTYNIKYIQQPGIADSKTLQTEIDRLLEEVNDQMSTYRKDSELSRFNQHTSSEPFAVSTQTLTVVKEAIRLNGLTEGALDVTVGPLVNLWGFGPEARPDVVPTDEELNARRAITGIEHLTIEGNTLSKDIPELYVDLSTIAKGWGVDVVADYLQSQGIENYMVEIGGEIRLKGLNRDGVPWRIAIEKPSVDQRSVQEIIEPGDYAIATSGDYRNYFEQDGVRYSHIIDPTTGRPINNRVVSVTVLDKSCMTADGLATGLMVMGEERGMAVAEANQIPVLMIVKTDDGFKEYASSSFKPFLSK</sequence>
<evidence type="ECO:0000250" key="1">
    <source>
        <dbReference type="UniProtKB" id="O83774"/>
    </source>
</evidence>
<evidence type="ECO:0000250" key="2">
    <source>
        <dbReference type="UniProtKB" id="P0AB85"/>
    </source>
</evidence>
<evidence type="ECO:0000250" key="3">
    <source>
        <dbReference type="UniProtKB" id="P41780"/>
    </source>
</evidence>
<evidence type="ECO:0000255" key="4">
    <source>
        <dbReference type="PROSITE-ProRule" id="PRU00303"/>
    </source>
</evidence>
<evidence type="ECO:0000269" key="5">
    <source>
    </source>
</evidence>
<evidence type="ECO:0000303" key="6">
    <source>
    </source>
</evidence>
<evidence type="ECO:0000305" key="7"/>
<evidence type="ECO:0000312" key="8">
    <source>
        <dbReference type="EMBL" id="ABQ20132.1"/>
    </source>
</evidence>
<evidence type="ECO:0000312" key="9">
    <source>
        <dbReference type="EMBL" id="ACP10395.1"/>
    </source>
</evidence>
<evidence type="ECO:0007829" key="10">
    <source>
        <dbReference type="PDB" id="6NXI"/>
    </source>
</evidence>
<evidence type="ECO:0007829" key="11">
    <source>
        <dbReference type="PDB" id="6NXJ"/>
    </source>
</evidence>
<name>APBE_VIBC3</name>
<accession>A5F5Y3</accession>
<reference key="1">
    <citation type="submission" date="2007-03" db="EMBL/GenBank/DDBJ databases">
        <authorList>
            <person name="Heidelberg J."/>
        </authorList>
    </citation>
    <scope>NUCLEOTIDE SEQUENCE [LARGE SCALE GENOMIC DNA]</scope>
    <source>
        <strain>ATCC 39541 / Classical Ogawa 395 / O395</strain>
    </source>
</reference>
<reference key="2">
    <citation type="journal article" date="2008" name="PLoS ONE">
        <title>A recalibrated molecular clock and independent origins for the cholera pandemic clones.</title>
        <authorList>
            <person name="Feng L."/>
            <person name="Reeves P.R."/>
            <person name="Lan R."/>
            <person name="Ren Y."/>
            <person name="Gao C."/>
            <person name="Zhou Z."/>
            <person name="Ren Y."/>
            <person name="Cheng J."/>
            <person name="Wang W."/>
            <person name="Wang J."/>
            <person name="Qian W."/>
            <person name="Li D."/>
            <person name="Wang L."/>
        </authorList>
    </citation>
    <scope>NUCLEOTIDE SEQUENCE [LARGE SCALE GENOMIC DNA]</scope>
    <source>
        <strain>ATCC 39541 / Classical Ogawa 395 / O395</strain>
    </source>
</reference>
<reference key="3">
    <citation type="journal article" date="2013" name="J. Biol. Chem.">
        <title>Alternative pyrimidine biosynthesis protein ApbE is a flavin transferase catalyzing covalent attachment of FMN to a threonine residue in bacterial flavoproteins.</title>
        <authorList>
            <person name="Bertsova Y.V."/>
            <person name="Fadeeva M.S."/>
            <person name="Kostyrko V.A."/>
            <person name="Serebryakova M.V."/>
            <person name="Baykov A.A."/>
            <person name="Bogachev A.V."/>
        </authorList>
    </citation>
    <scope>FUNCTION</scope>
    <scope>CATALYTIC ACTIVITY</scope>
    <scope>COFACTOR</scope>
    <source>
        <strain>ATCC 39541 / Classical Ogawa 395 / O395</strain>
    </source>
</reference>
<dbReference type="EC" id="2.7.1.180" evidence="5"/>
<dbReference type="EMBL" id="CP000627">
    <property type="protein sequence ID" value="ABQ20132.1"/>
    <property type="status" value="ALT_INIT"/>
    <property type="molecule type" value="Genomic_DNA"/>
</dbReference>
<dbReference type="EMBL" id="CP001235">
    <property type="protein sequence ID" value="ACP10395.1"/>
    <property type="status" value="ALT_INIT"/>
    <property type="molecule type" value="Genomic_DNA"/>
</dbReference>
<dbReference type="RefSeq" id="WP_001246830.1">
    <property type="nucleotide sequence ID" value="NZ_JAACZH010000008.1"/>
</dbReference>
<dbReference type="PDB" id="6NXI">
    <property type="method" value="X-ray"/>
    <property type="resolution" value="1.61 A"/>
    <property type="chains" value="A=18-334"/>
</dbReference>
<dbReference type="PDB" id="6NXJ">
    <property type="method" value="X-ray"/>
    <property type="resolution" value="1.92 A"/>
    <property type="chains" value="A/B=18-334"/>
</dbReference>
<dbReference type="PDBsum" id="6NXI"/>
<dbReference type="PDBsum" id="6NXJ"/>
<dbReference type="SMR" id="A5F5Y3"/>
<dbReference type="KEGG" id="vco:VC0395_A1878"/>
<dbReference type="KEGG" id="vcr:VC395_2405"/>
<dbReference type="PATRIC" id="fig|345073.21.peg.2318"/>
<dbReference type="eggNOG" id="COG1477">
    <property type="taxonomic scope" value="Bacteria"/>
</dbReference>
<dbReference type="HOGENOM" id="CLU_044403_0_0_6"/>
<dbReference type="OrthoDB" id="9778595at2"/>
<dbReference type="BioCyc" id="MetaCyc:MONOMER-18021"/>
<dbReference type="BRENDA" id="2.7.1.180">
    <property type="organism ID" value="15862"/>
</dbReference>
<dbReference type="BRENDA" id="7.2.1.1">
    <property type="organism ID" value="15862"/>
</dbReference>
<dbReference type="Proteomes" id="UP000000249">
    <property type="component" value="Chromosome 2"/>
</dbReference>
<dbReference type="GO" id="GO:0005886">
    <property type="term" value="C:plasma membrane"/>
    <property type="evidence" value="ECO:0007669"/>
    <property type="project" value="UniProtKB-SubCell"/>
</dbReference>
<dbReference type="GO" id="GO:0046872">
    <property type="term" value="F:metal ion binding"/>
    <property type="evidence" value="ECO:0007669"/>
    <property type="project" value="UniProtKB-KW"/>
</dbReference>
<dbReference type="GO" id="GO:0016740">
    <property type="term" value="F:transferase activity"/>
    <property type="evidence" value="ECO:0007669"/>
    <property type="project" value="UniProtKB-KW"/>
</dbReference>
<dbReference type="FunFam" id="3.10.520.10:FF:000001">
    <property type="entry name" value="FAD:protein FMN transferase"/>
    <property type="match status" value="1"/>
</dbReference>
<dbReference type="Gene3D" id="3.10.520.10">
    <property type="entry name" value="ApbE-like domains"/>
    <property type="match status" value="1"/>
</dbReference>
<dbReference type="InterPro" id="IPR024932">
    <property type="entry name" value="ApbE"/>
</dbReference>
<dbReference type="InterPro" id="IPR003374">
    <property type="entry name" value="ApbE-like_sf"/>
</dbReference>
<dbReference type="PANTHER" id="PTHR30040:SF2">
    <property type="entry name" value="FAD:PROTEIN FMN TRANSFERASE"/>
    <property type="match status" value="1"/>
</dbReference>
<dbReference type="PANTHER" id="PTHR30040">
    <property type="entry name" value="THIAMINE BIOSYNTHESIS LIPOPROTEIN APBE"/>
    <property type="match status" value="1"/>
</dbReference>
<dbReference type="Pfam" id="PF02424">
    <property type="entry name" value="ApbE"/>
    <property type="match status" value="1"/>
</dbReference>
<dbReference type="PIRSF" id="PIRSF006268">
    <property type="entry name" value="ApbE"/>
    <property type="match status" value="1"/>
</dbReference>
<dbReference type="SUPFAM" id="SSF143631">
    <property type="entry name" value="ApbE-like"/>
    <property type="match status" value="1"/>
</dbReference>
<dbReference type="PROSITE" id="PS51257">
    <property type="entry name" value="PROKAR_LIPOPROTEIN"/>
    <property type="match status" value="1"/>
</dbReference>
<keyword id="KW-0002">3D-structure</keyword>
<keyword id="KW-0997">Cell inner membrane</keyword>
<keyword id="KW-1003">Cell membrane</keyword>
<keyword id="KW-0274">FAD</keyword>
<keyword id="KW-0285">Flavoprotein</keyword>
<keyword id="KW-0449">Lipoprotein</keyword>
<keyword id="KW-0460">Magnesium</keyword>
<keyword id="KW-0472">Membrane</keyword>
<keyword id="KW-0479">Metal-binding</keyword>
<keyword id="KW-0564">Palmitate</keyword>
<keyword id="KW-0732">Signal</keyword>
<keyword id="KW-0808">Transferase</keyword>
<gene>
    <name evidence="6" type="primary">apbE</name>
    <name evidence="8" type="ordered locus">VC0395_A1878</name>
    <name evidence="9" type="ordered locus">VC395_2405</name>
</gene>
<feature type="signal peptide" evidence="4">
    <location>
        <begin position="1"/>
        <end position="16"/>
    </location>
</feature>
<feature type="chain" id="PRO_0000430778" description="FAD:protein FMN transferase">
    <location>
        <begin position="17"/>
        <end position="334"/>
    </location>
</feature>
<feature type="binding site" evidence="3">
    <location>
        <position position="31"/>
    </location>
    <ligand>
        <name>FAD</name>
        <dbReference type="ChEBI" id="CHEBI:57692"/>
    </ligand>
</feature>
<feature type="binding site" evidence="3">
    <location>
        <position position="69"/>
    </location>
    <ligand>
        <name>FAD</name>
        <dbReference type="ChEBI" id="CHEBI:57692"/>
    </ligand>
</feature>
<feature type="binding site" evidence="3">
    <location>
        <begin position="110"/>
        <end position="112"/>
    </location>
    <ligand>
        <name>FAD</name>
        <dbReference type="ChEBI" id="CHEBI:57692"/>
    </ligand>
</feature>
<feature type="binding site" evidence="3">
    <location>
        <position position="168"/>
    </location>
    <ligand>
        <name>FAD</name>
        <dbReference type="ChEBI" id="CHEBI:57692"/>
    </ligand>
</feature>
<feature type="binding site" evidence="2">
    <location>
        <position position="171"/>
    </location>
    <ligand>
        <name>Mg(2+)</name>
        <dbReference type="ChEBI" id="CHEBI:18420"/>
    </ligand>
</feature>
<feature type="binding site" evidence="1">
    <location>
        <position position="174"/>
    </location>
    <ligand>
        <name>FAD</name>
        <dbReference type="ChEBI" id="CHEBI:57692"/>
    </ligand>
</feature>
<feature type="binding site" evidence="3">
    <location>
        <position position="259"/>
    </location>
    <ligand>
        <name>FAD</name>
        <dbReference type="ChEBI" id="CHEBI:57692"/>
    </ligand>
</feature>
<feature type="binding site" evidence="1">
    <location>
        <position position="285"/>
    </location>
    <ligand>
        <name>Mg(2+)</name>
        <dbReference type="ChEBI" id="CHEBI:18420"/>
    </ligand>
</feature>
<feature type="binding site" evidence="1">
    <location>
        <position position="289"/>
    </location>
    <ligand>
        <name>Mg(2+)</name>
        <dbReference type="ChEBI" id="CHEBI:18420"/>
    </ligand>
</feature>
<feature type="lipid moiety-binding region" description="N-palmitoyl cysteine" evidence="4">
    <location>
        <position position="17"/>
    </location>
</feature>
<feature type="lipid moiety-binding region" description="S-diacylglycerol cysteine" evidence="4">
    <location>
        <position position="17"/>
    </location>
</feature>
<feature type="strand" evidence="10">
    <location>
        <begin position="23"/>
        <end position="30"/>
    </location>
</feature>
<feature type="strand" evidence="10">
    <location>
        <begin position="33"/>
        <end position="40"/>
    </location>
</feature>
<feature type="helix" evidence="10">
    <location>
        <begin position="48"/>
        <end position="66"/>
    </location>
</feature>
<feature type="helix" evidence="10">
    <location>
        <begin position="74"/>
        <end position="80"/>
    </location>
</feature>
<feature type="strand" evidence="10">
    <location>
        <begin position="83"/>
        <end position="85"/>
    </location>
</feature>
<feature type="helix" evidence="10">
    <location>
        <begin position="91"/>
        <end position="106"/>
    </location>
</feature>
<feature type="turn" evidence="10">
    <location>
        <begin position="107"/>
        <end position="109"/>
    </location>
</feature>
<feature type="helix" evidence="10">
    <location>
        <begin position="113"/>
        <end position="115"/>
    </location>
</feature>
<feature type="helix" evidence="10">
    <location>
        <begin position="116"/>
        <end position="121"/>
    </location>
</feature>
<feature type="strand" evidence="10">
    <location>
        <begin position="124"/>
        <end position="127"/>
    </location>
</feature>
<feature type="helix" evidence="10">
    <location>
        <begin position="136"/>
        <end position="143"/>
    </location>
</feature>
<feature type="helix" evidence="10">
    <location>
        <begin position="148"/>
        <end position="150"/>
    </location>
</feature>
<feature type="strand" evidence="10">
    <location>
        <begin position="151"/>
        <end position="154"/>
    </location>
</feature>
<feature type="strand" evidence="10">
    <location>
        <begin position="157"/>
        <end position="162"/>
    </location>
</feature>
<feature type="turn" evidence="10">
    <location>
        <begin position="170"/>
        <end position="172"/>
    </location>
</feature>
<feature type="helix" evidence="10">
    <location>
        <begin position="173"/>
        <end position="187"/>
    </location>
</feature>
<feature type="strand" evidence="10">
    <location>
        <begin position="192"/>
        <end position="197"/>
    </location>
</feature>
<feature type="strand" evidence="10">
    <location>
        <begin position="200"/>
        <end position="206"/>
    </location>
</feature>
<feature type="strand" evidence="10">
    <location>
        <begin position="210"/>
        <end position="212"/>
    </location>
</feature>
<feature type="strand" evidence="10">
    <location>
        <begin position="215"/>
        <end position="219"/>
    </location>
</feature>
<feature type="strand" evidence="10">
    <location>
        <begin position="227"/>
        <end position="231"/>
    </location>
</feature>
<feature type="strand" evidence="10">
    <location>
        <begin position="235"/>
        <end position="242"/>
    </location>
</feature>
<feature type="helix" evidence="11">
    <location>
        <begin position="244"/>
        <end position="248"/>
    </location>
</feature>
<feature type="strand" evidence="11">
    <location>
        <begin position="251"/>
        <end position="253"/>
    </location>
</feature>
<feature type="turn" evidence="10">
    <location>
        <begin position="261"/>
        <end position="263"/>
    </location>
</feature>
<feature type="strand" evidence="10">
    <location>
        <begin position="264"/>
        <end position="266"/>
    </location>
</feature>
<feature type="strand" evidence="10">
    <location>
        <begin position="269"/>
        <end position="279"/>
    </location>
</feature>
<feature type="helix" evidence="10">
    <location>
        <begin position="281"/>
        <end position="294"/>
    </location>
</feature>
<feature type="helix" evidence="10">
    <location>
        <begin position="296"/>
        <end position="305"/>
    </location>
</feature>
<feature type="strand" evidence="10">
    <location>
        <begin position="310"/>
        <end position="315"/>
    </location>
</feature>
<feature type="strand" evidence="10">
    <location>
        <begin position="317"/>
        <end position="324"/>
    </location>
</feature>
<feature type="turn" evidence="10">
    <location>
        <begin position="326"/>
        <end position="328"/>
    </location>
</feature>
<feature type="helix" evidence="10">
    <location>
        <begin position="329"/>
        <end position="331"/>
    </location>
</feature>